<geneLocation type="cyanelle"/>
<protein>
    <recommendedName>
        <fullName evidence="2">Small ribosomal subunit protein bS16c</fullName>
    </recommendedName>
    <alternativeName>
        <fullName>Cyanelle 30S ribosomal protein S16</fullName>
    </alternativeName>
</protein>
<comment type="subcellular location">
    <subcellularLocation>
        <location>Plastid</location>
        <location>Cyanelle</location>
    </subcellularLocation>
</comment>
<comment type="similarity">
    <text evidence="1">Belongs to the bacterial ribosomal protein bS16 family.</text>
</comment>
<sequence length="77" mass="8892">MVKLRLKRYGRKGQVTYRIVAMNNLSRRDGKAIEELGFYNPRTNESSLNIANIKRRIEQGAQPTNTVRYILAKANIL</sequence>
<organism>
    <name type="scientific">Cyanophora paradoxa</name>
    <dbReference type="NCBI Taxonomy" id="2762"/>
    <lineage>
        <taxon>Eukaryota</taxon>
        <taxon>Glaucocystophyceae</taxon>
        <taxon>Cyanophoraceae</taxon>
        <taxon>Cyanophora</taxon>
    </lineage>
</organism>
<proteinExistence type="inferred from homology"/>
<evidence type="ECO:0000255" key="1">
    <source>
        <dbReference type="HAMAP-Rule" id="MF_00385"/>
    </source>
</evidence>
<evidence type="ECO:0000305" key="2"/>
<name>RR16_CYAPA</name>
<gene>
    <name evidence="1" type="primary">rps16</name>
</gene>
<feature type="chain" id="PRO_0000167290" description="Small ribosomal subunit protein bS16c">
    <location>
        <begin position="1"/>
        <end position="77"/>
    </location>
</feature>
<reference key="1">
    <citation type="journal article" date="1995" name="Plant Mol. Biol. Rep.">
        <title>Nucleotide sequence of the cyanelle DNA from Cyanophora paradoxa.</title>
        <authorList>
            <person name="Stirewalt V.L."/>
            <person name="Michalowski C.B."/>
            <person name="Loeffelhardt W."/>
            <person name="Bohnert H.J."/>
            <person name="Bryant D.A."/>
        </authorList>
    </citation>
    <scope>NUCLEOTIDE SEQUENCE [LARGE SCALE GENOMIC DNA]</scope>
    <source>
        <strain>UTEX LB 555 / Pringsheim</strain>
    </source>
</reference>
<reference key="2">
    <citation type="book" date="1997" name="Eukaryotism and symbiosis">
        <title>The complete sequence of the cyanelle genome of Cyanophora paradoxa: the genetic complexity of a primitive plastid.</title>
        <editorList>
            <person name="Schenk H.E.A."/>
            <person name="Herrmann R."/>
            <person name="Jeon K.W."/>
            <person name="Mueller N.E."/>
            <person name="Schwemmler W."/>
        </editorList>
        <authorList>
            <person name="Loeffelhardt W."/>
            <person name="Stirewalt V.L."/>
            <person name="Michalowski C.B."/>
            <person name="Annarella M."/>
            <person name="Farley J.Y."/>
            <person name="Schluchter W.M."/>
            <person name="Chung S."/>
            <person name="Newmann-Spallart C."/>
            <person name="Steiner J.M."/>
            <person name="Jakowitsch J."/>
            <person name="Bohnert H.J."/>
            <person name="Bryant D.A."/>
        </authorList>
    </citation>
    <scope>NUCLEOTIDE SEQUENCE [LARGE SCALE GENOMIC DNA]</scope>
    <source>
        <strain>UTEX LB 555 / Pringsheim</strain>
    </source>
</reference>
<keyword id="KW-0194">Cyanelle</keyword>
<keyword id="KW-0934">Plastid</keyword>
<keyword id="KW-0687">Ribonucleoprotein</keyword>
<keyword id="KW-0689">Ribosomal protein</keyword>
<accession>P48139</accession>
<dbReference type="EMBL" id="U30821">
    <property type="protein sequence ID" value="AAA81262.1"/>
    <property type="molecule type" value="Genomic_DNA"/>
</dbReference>
<dbReference type="PIR" id="T06919">
    <property type="entry name" value="T06919"/>
</dbReference>
<dbReference type="RefSeq" id="NP_043231.1">
    <property type="nucleotide sequence ID" value="NC_001675.1"/>
</dbReference>
<dbReference type="SMR" id="P48139"/>
<dbReference type="GeneID" id="801635"/>
<dbReference type="GO" id="GO:0009842">
    <property type="term" value="C:cyanelle"/>
    <property type="evidence" value="ECO:0007669"/>
    <property type="project" value="UniProtKB-SubCell"/>
</dbReference>
<dbReference type="GO" id="GO:0005739">
    <property type="term" value="C:mitochondrion"/>
    <property type="evidence" value="ECO:0007669"/>
    <property type="project" value="GOC"/>
</dbReference>
<dbReference type="GO" id="GO:0015935">
    <property type="term" value="C:small ribosomal subunit"/>
    <property type="evidence" value="ECO:0007669"/>
    <property type="project" value="TreeGrafter"/>
</dbReference>
<dbReference type="GO" id="GO:0003735">
    <property type="term" value="F:structural constituent of ribosome"/>
    <property type="evidence" value="ECO:0007669"/>
    <property type="project" value="InterPro"/>
</dbReference>
<dbReference type="GO" id="GO:0032543">
    <property type="term" value="P:mitochondrial translation"/>
    <property type="evidence" value="ECO:0007669"/>
    <property type="project" value="TreeGrafter"/>
</dbReference>
<dbReference type="Gene3D" id="3.30.1320.10">
    <property type="match status" value="1"/>
</dbReference>
<dbReference type="HAMAP" id="MF_00385">
    <property type="entry name" value="Ribosomal_bS16"/>
    <property type="match status" value="1"/>
</dbReference>
<dbReference type="InterPro" id="IPR000307">
    <property type="entry name" value="Ribosomal_bS16"/>
</dbReference>
<dbReference type="InterPro" id="IPR020592">
    <property type="entry name" value="Ribosomal_bS16_CS"/>
</dbReference>
<dbReference type="InterPro" id="IPR023803">
    <property type="entry name" value="Ribosomal_bS16_dom_sf"/>
</dbReference>
<dbReference type="NCBIfam" id="TIGR00002">
    <property type="entry name" value="S16"/>
    <property type="match status" value="1"/>
</dbReference>
<dbReference type="PANTHER" id="PTHR12919">
    <property type="entry name" value="30S RIBOSOMAL PROTEIN S16"/>
    <property type="match status" value="1"/>
</dbReference>
<dbReference type="PANTHER" id="PTHR12919:SF20">
    <property type="entry name" value="SMALL RIBOSOMAL SUBUNIT PROTEIN BS16M"/>
    <property type="match status" value="1"/>
</dbReference>
<dbReference type="Pfam" id="PF00886">
    <property type="entry name" value="Ribosomal_S16"/>
    <property type="match status" value="1"/>
</dbReference>
<dbReference type="SUPFAM" id="SSF54565">
    <property type="entry name" value="Ribosomal protein S16"/>
    <property type="match status" value="1"/>
</dbReference>
<dbReference type="PROSITE" id="PS00732">
    <property type="entry name" value="RIBOSOMAL_S16"/>
    <property type="match status" value="1"/>
</dbReference>